<evidence type="ECO:0000250" key="1">
    <source>
        <dbReference type="UniProtKB" id="Q4WAW7"/>
    </source>
</evidence>
<evidence type="ECO:0000250" key="2">
    <source>
        <dbReference type="UniProtKB" id="Q50EL0"/>
    </source>
</evidence>
<evidence type="ECO:0000250" key="3">
    <source>
        <dbReference type="UniProtKB" id="Q6Q874"/>
    </source>
</evidence>
<evidence type="ECO:0000269" key="4">
    <source>
    </source>
</evidence>
<evidence type="ECO:0000269" key="5">
    <source>
    </source>
</evidence>
<evidence type="ECO:0000269" key="6">
    <source>
    </source>
</evidence>
<evidence type="ECO:0000269" key="7">
    <source>
    </source>
</evidence>
<evidence type="ECO:0000269" key="8">
    <source>
    </source>
</evidence>
<evidence type="ECO:0000269" key="9">
    <source>
    </source>
</evidence>
<evidence type="ECO:0000303" key="10">
    <source>
    </source>
</evidence>
<evidence type="ECO:0000303" key="11">
    <source>
    </source>
</evidence>
<evidence type="ECO:0000305" key="12"/>
<evidence type="ECO:0000305" key="13">
    <source>
    </source>
</evidence>
<protein>
    <recommendedName>
        <fullName evidence="11">7-dimethylallyltryptophan synthase hasE</fullName>
        <shortName evidence="11">7-DMATS hasE</shortName>
        <ecNumber evidence="13">2.5.1.80</ecNumber>
    </recommendedName>
    <alternativeName>
        <fullName evidence="11">Hexadehydro-astechrome biosynthesis cluster protein E</fullName>
    </alternativeName>
    <alternativeName>
        <fullName evidence="10">Tryptophan aminopeptidase</fullName>
        <ecNumber evidence="6">3.4.11.17</ecNumber>
    </alternativeName>
    <alternativeName>
        <fullName evidence="11">Tyrosine O-prenyltransferase hasE</fullName>
    </alternativeName>
</protein>
<proteinExistence type="evidence at protein level"/>
<feature type="chain" id="PRO_0000461229" description="7-dimethylallyltryptophan synthase hasE">
    <location>
        <begin position="1"/>
        <end position="472"/>
    </location>
</feature>
<feature type="binding site" evidence="2">
    <location>
        <position position="138"/>
    </location>
    <ligand>
        <name>L-tryptophan</name>
        <dbReference type="ChEBI" id="CHEBI:57912"/>
    </ligand>
</feature>
<feature type="binding site" evidence="1">
    <location>
        <position position="154"/>
    </location>
    <ligand>
        <name>dimethylallyl diphosphate</name>
        <dbReference type="ChEBI" id="CHEBI:57623"/>
    </ligand>
</feature>
<feature type="binding site" evidence="1">
    <location>
        <position position="239"/>
    </location>
    <ligand>
        <name>dimethylallyl diphosphate</name>
        <dbReference type="ChEBI" id="CHEBI:57623"/>
    </ligand>
</feature>
<feature type="binding site" evidence="1">
    <location>
        <position position="241"/>
    </location>
    <ligand>
        <name>dimethylallyl diphosphate</name>
        <dbReference type="ChEBI" id="CHEBI:57623"/>
    </ligand>
</feature>
<feature type="binding site" evidence="1">
    <location>
        <position position="313"/>
    </location>
    <ligand>
        <name>dimethylallyl diphosphate</name>
        <dbReference type="ChEBI" id="CHEBI:57623"/>
    </ligand>
</feature>
<feature type="binding site" evidence="1">
    <location>
        <position position="315"/>
    </location>
    <ligand>
        <name>dimethylallyl diphosphate</name>
        <dbReference type="ChEBI" id="CHEBI:57623"/>
    </ligand>
</feature>
<feature type="binding site" evidence="1">
    <location>
        <position position="393"/>
    </location>
    <ligand>
        <name>dimethylallyl diphosphate</name>
        <dbReference type="ChEBI" id="CHEBI:57623"/>
    </ligand>
</feature>
<feature type="binding site" evidence="1">
    <location>
        <position position="460"/>
    </location>
    <ligand>
        <name>dimethylallyl diphosphate</name>
        <dbReference type="ChEBI" id="CHEBI:57623"/>
    </ligand>
</feature>
<feature type="binding site" evidence="1">
    <location>
        <position position="464"/>
    </location>
    <ligand>
        <name>dimethylallyl diphosphate</name>
        <dbReference type="ChEBI" id="CHEBI:57623"/>
    </ligand>
</feature>
<feature type="site" description="Required for regioselectivity" evidence="1">
    <location>
        <position position="156"/>
    </location>
</feature>
<dbReference type="EC" id="2.5.1.80" evidence="13"/>
<dbReference type="EC" id="3.4.11.17" evidence="6"/>
<dbReference type="EMBL" id="DS499596">
    <property type="protein sequence ID" value="EDP52460.1"/>
    <property type="molecule type" value="Genomic_DNA"/>
</dbReference>
<dbReference type="SMR" id="B0XWK7"/>
<dbReference type="MEROPS" id="M77.001"/>
<dbReference type="EnsemblFungi" id="EDP52460">
    <property type="protein sequence ID" value="EDP52460"/>
    <property type="gene ID" value="AFUB_036260"/>
</dbReference>
<dbReference type="VEuPathDB" id="FungiDB:AFUB_036260"/>
<dbReference type="HOGENOM" id="CLU_037431_2_2_1"/>
<dbReference type="OrthoDB" id="26342at5052"/>
<dbReference type="PhylomeDB" id="B0XWK7"/>
<dbReference type="Proteomes" id="UP000001699">
    <property type="component" value="Unassembled WGS sequence"/>
</dbReference>
<dbReference type="GO" id="GO:0004177">
    <property type="term" value="F:aminopeptidase activity"/>
    <property type="evidence" value="ECO:0007669"/>
    <property type="project" value="UniProtKB-KW"/>
</dbReference>
<dbReference type="GO" id="GO:0050364">
    <property type="term" value="F:tryptophan dimethylallyltransferase activity"/>
    <property type="evidence" value="ECO:0007669"/>
    <property type="project" value="UniProtKB-EC"/>
</dbReference>
<dbReference type="GO" id="GO:0009820">
    <property type="term" value="P:alkaloid metabolic process"/>
    <property type="evidence" value="ECO:0007669"/>
    <property type="project" value="InterPro"/>
</dbReference>
<dbReference type="GO" id="GO:0006508">
    <property type="term" value="P:proteolysis"/>
    <property type="evidence" value="ECO:0007669"/>
    <property type="project" value="UniProtKB-KW"/>
</dbReference>
<dbReference type="CDD" id="cd13929">
    <property type="entry name" value="PT-DMATS_CymD"/>
    <property type="match status" value="1"/>
</dbReference>
<dbReference type="InterPro" id="IPR033964">
    <property type="entry name" value="Aro_prenylTrfase"/>
</dbReference>
<dbReference type="InterPro" id="IPR017795">
    <property type="entry name" value="Aro_prenylTrfase_DMATS"/>
</dbReference>
<dbReference type="InterPro" id="IPR012148">
    <property type="entry name" value="DMATS-type_fun"/>
</dbReference>
<dbReference type="NCBIfam" id="TIGR03429">
    <property type="entry name" value="arom_pren_DMATS"/>
    <property type="match status" value="1"/>
</dbReference>
<dbReference type="PANTHER" id="PTHR40627">
    <property type="entry name" value="INDOLE PRENYLTRANSFERASE TDIB-RELATED"/>
    <property type="match status" value="1"/>
</dbReference>
<dbReference type="PANTHER" id="PTHR40627:SF3">
    <property type="entry name" value="PRENYLTRANSFERASE ASQH2-RELATED"/>
    <property type="match status" value="1"/>
</dbReference>
<dbReference type="Pfam" id="PF11991">
    <property type="entry name" value="Trp_DMAT"/>
    <property type="match status" value="1"/>
</dbReference>
<dbReference type="PIRSF" id="PIRSF000509">
    <property type="entry name" value="Trp_DMAT"/>
    <property type="match status" value="1"/>
</dbReference>
<dbReference type="SFLD" id="SFLDS00036">
    <property type="entry name" value="Aromatic_Prenyltransferase"/>
    <property type="match status" value="1"/>
</dbReference>
<dbReference type="SFLD" id="SFLDG01162">
    <property type="entry name" value="I"/>
    <property type="match status" value="1"/>
</dbReference>
<gene>
    <name evidence="11" type="primary">hasE</name>
    <name type="ORF">AFUB_036260</name>
</gene>
<organism>
    <name type="scientific">Aspergillus fumigatus (strain CBS 144.89 / FGSC A1163 / CEA10)</name>
    <name type="common">Neosartorya fumigata</name>
    <dbReference type="NCBI Taxonomy" id="451804"/>
    <lineage>
        <taxon>Eukaryota</taxon>
        <taxon>Fungi</taxon>
        <taxon>Dikarya</taxon>
        <taxon>Ascomycota</taxon>
        <taxon>Pezizomycotina</taxon>
        <taxon>Eurotiomycetes</taxon>
        <taxon>Eurotiomycetidae</taxon>
        <taxon>Eurotiales</taxon>
        <taxon>Aspergillaceae</taxon>
        <taxon>Aspergillus</taxon>
        <taxon>Aspergillus subgen. Fumigati</taxon>
    </lineage>
</organism>
<accession>B0XWK7</accession>
<reference key="1">
    <citation type="journal article" date="2008" name="PLoS Genet.">
        <title>Genomic islands in the pathogenic filamentous fungus Aspergillus fumigatus.</title>
        <authorList>
            <person name="Fedorova N.D."/>
            <person name="Khaldi N."/>
            <person name="Joardar V.S."/>
            <person name="Maiti R."/>
            <person name="Amedeo P."/>
            <person name="Anderson M.J."/>
            <person name="Crabtree J."/>
            <person name="Silva J.C."/>
            <person name="Badger J.H."/>
            <person name="Albarraq A."/>
            <person name="Angiuoli S."/>
            <person name="Bussey H."/>
            <person name="Bowyer P."/>
            <person name="Cotty P.J."/>
            <person name="Dyer P.S."/>
            <person name="Egan A."/>
            <person name="Galens K."/>
            <person name="Fraser-Liggett C.M."/>
            <person name="Haas B.J."/>
            <person name="Inman J.M."/>
            <person name="Kent R."/>
            <person name="Lemieux S."/>
            <person name="Malavazi I."/>
            <person name="Orvis J."/>
            <person name="Roemer T."/>
            <person name="Ronning C.M."/>
            <person name="Sundaram J.P."/>
            <person name="Sutton G."/>
            <person name="Turner G."/>
            <person name="Venter J.C."/>
            <person name="White O.R."/>
            <person name="Whitty B.R."/>
            <person name="Youngman P."/>
            <person name="Wolfe K.H."/>
            <person name="Goldman G.H."/>
            <person name="Wortman J.R."/>
            <person name="Jiang B."/>
            <person name="Denning D.W."/>
            <person name="Nierman W.C."/>
        </authorList>
    </citation>
    <scope>NUCLEOTIDE SEQUENCE [LARGE SCALE GENOMIC DNA]</scope>
    <source>
        <strain>CBS 144.89 / FGSC A1163 / CEA10</strain>
    </source>
</reference>
<reference key="2">
    <citation type="journal article" date="2007" name="Microbiology">
        <title>A 7-dimethylallyltryptophan synthase from Aspergillus fumigatus: overproduction, purification and biochemical characterization.</title>
        <authorList>
            <person name="Kremer A."/>
            <person name="Westrich L."/>
            <person name="Li S.-M."/>
        </authorList>
    </citation>
    <scope>FUNCTION</scope>
    <scope>CATALYTIC ACTIVITY</scope>
    <scope>BIOPHYSICOCHEMICAL PROPERTIES</scope>
</reference>
<reference key="3">
    <citation type="journal article" date="2008" name="Appl. Microbiol. Biotechnol.">
        <title>Potential of a 7-dimethylallyltryptophan synthase as a tool for production of prenylated indole derivatives.</title>
        <authorList>
            <person name="Kremer A."/>
            <person name="Li S.-M."/>
        </authorList>
    </citation>
    <scope>FUNCTION</scope>
    <scope>CATALYTIC ACTIVITY</scope>
    <scope>SUBSTRATE SPECIFICITY</scope>
</reference>
<reference key="4">
    <citation type="journal article" date="2008" name="Chem. Biol.">
        <title>Tryptophan aminopeptidase activity of several indole prenyltransferases from Aspergillus fumigatus.</title>
        <authorList>
            <person name="Kremer A."/>
            <person name="Li S.-M."/>
        </authorList>
    </citation>
    <scope>FUNCTION</scope>
    <scope>CATALYTIC ACTIVITY</scope>
    <scope>BIOPHYSICOCHEMICAL PROPERTIES</scope>
    <scope>SUBSTRATE SPECIFICITY</scope>
</reference>
<reference key="5">
    <citation type="journal article" date="2013" name="J. Am. Chem. Soc.">
        <title>A nonribosomal peptide synthetase-derived iron(III) complex from the pathogenic fungus Aspergillus fumigatus.</title>
        <authorList>
            <person name="Yin W.B."/>
            <person name="Baccile J.A."/>
            <person name="Bok J.W."/>
            <person name="Chen Y."/>
            <person name="Keller N.P."/>
            <person name="Schroeder F.C."/>
        </authorList>
    </citation>
    <scope>FUNCTION</scope>
    <scope>DISRUPTION PHENOTYPE</scope>
    <scope>CATALYTIC ACTIVITY</scope>
    <scope>PATHWAY</scope>
</reference>
<reference key="6">
    <citation type="journal article" date="2014" name="Front. Microbiol.">
        <title>Perturbations in small molecule synthesis uncovers an iron-responsive secondary metabolite network in Aspergillus fumigatus.</title>
        <authorList>
            <person name="Wiemann P."/>
            <person name="Lechner B.E."/>
            <person name="Baccile J.A."/>
            <person name="Velk T.A."/>
            <person name="Yin W.B."/>
            <person name="Bok J.W."/>
            <person name="Pakala S."/>
            <person name="Losada L."/>
            <person name="Nierman W.C."/>
            <person name="Schroeder F.C."/>
            <person name="Haas H."/>
            <person name="Keller N.P."/>
        </authorList>
    </citation>
    <scope>INDUCTION</scope>
</reference>
<reference key="7">
    <citation type="journal article" date="2022" name="J. Fungi">
        <title>Stress responses elicited by glucose withdrawal in Aspergillus fumigatus.</title>
        <authorList>
            <person name="Emri T."/>
            <person name="Antal K."/>
            <person name="Gila B."/>
            <person name="Jonas A.P."/>
            <person name="Pocsi I."/>
        </authorList>
    </citation>
    <scope>INDUCTION</scope>
</reference>
<comment type="function">
    <text evidence="4 5 6 7">7-dimethylallyltryptophan synthase; part of the gene cluster that mediates the biosynthesis of hexadehydro-astechrome (HAS), a tryptophan-derived iron(III)-complex that acts as a virulence factor in infected mice (PubMed:23360537). Catalyzes the prenylation of L-tryptophan at the C-7 position of the indole moiety (PubMed:17906140, PubMed:18481055, PubMed:18635009). The enzyme is specific for dimethylallyl diphosphate (DMAPP) as prenyl donor. Also accepts D-tryptophan, typtophan-derivatives with modifications at the side chain or the indole ring, and linear and cyclic dipeptides such as H-L-Trp-L-Gly-OH or cyclo-L-Trp-L-Gly as substrates, however with lower efficiency. Also has tryptophan aminopeptidase activity towards linear peptides with a tryptophanyl moiety at the N-terminus. Dipeptides are better substrates than peptides with 3 or more amino acids. Enzymatic rate constants however are much higher for the prenyltransferase activity than for the aminopeptidase activity (PubMed:17906140, PubMed:18481055, PubMed:18635009). Within the hexadehydro-astechrome biosyntetic pathway, hasE catalyzes the prenylation of the hasD-tethered tryptophan or the resulting tethered Trp-Ala dipeptid (PubMed:23360537). The HAS biosynthesis begins with the synthesis of a tethered Trp-Ala dipeptide by the NRPS hasD. The 7-dimethylallyltryptophan synthase hasE then catalyzes the prenylation of the hasD-tethered tryptophan or the resulting tethered Trp-Ala dipeptide at the C-7 position of the indole moiety. HAS biosynthesis continues via tethered intermediates with the succesive actions of the cytochrome P450 monooxygenase hasH, the O-methyltransferase hasC, and the FAD-linked oxidoreductase hasG. The resulting O-methylated diketopiperazine is then released from hasD. Finally, three O-methylated diketopiperazine molecules assemble in a trimeric complex with Fe(III) to produce hexadehydro-astechrome (PubMed:23360537).</text>
</comment>
<comment type="catalytic activity">
    <reaction evidence="4 5">
        <text>L-tryptophan + dimethylallyl diphosphate = 7-(3-methylbut-2-enyl)-L-tryptophan + diphosphate</text>
        <dbReference type="Rhea" id="RHEA:30563"/>
        <dbReference type="ChEBI" id="CHEBI:33019"/>
        <dbReference type="ChEBI" id="CHEBI:57623"/>
        <dbReference type="ChEBI" id="CHEBI:57912"/>
        <dbReference type="ChEBI" id="CHEBI:62497"/>
        <dbReference type="EC" id="2.5.1.80"/>
    </reaction>
</comment>
<comment type="catalytic activity">
    <reaction evidence="6">
        <text>an N-terminal L-tryptophanyl-L-alpha-aminoacyl-[peptide] + H2O = an N-terminal L-alpha-aminoacyl-[peptide] + L-tryptophan</text>
        <dbReference type="Rhea" id="RHEA:72999"/>
        <dbReference type="Rhea" id="RHEA-COMP:9780"/>
        <dbReference type="Rhea" id="RHEA-COMP:18174"/>
        <dbReference type="ChEBI" id="CHEBI:15377"/>
        <dbReference type="ChEBI" id="CHEBI:57912"/>
        <dbReference type="ChEBI" id="CHEBI:78597"/>
        <dbReference type="ChEBI" id="CHEBI:192694"/>
        <dbReference type="EC" id="3.4.11.17"/>
    </reaction>
    <physiologicalReaction direction="left-to-right" evidence="6">
        <dbReference type="Rhea" id="RHEA:73000"/>
    </physiologicalReaction>
</comment>
<comment type="biophysicochemical properties">
    <kinetics>
        <KM evidence="4">67 uM for dimethylallyl diphosphate</KM>
        <KM evidence="4">137 uM for L-tryptophan</KM>
        <KM evidence="6">350 uM for H-L-Trp-L-Gly-OH (for aminopeptidase activity)</KM>
        <Vmax evidence="4">0.21 umol/min/mg enzyme</Vmax>
    </kinetics>
</comment>
<comment type="pathway">
    <text evidence="7">Secondary metabolite biosynthesis.</text>
</comment>
<comment type="subunit">
    <text evidence="3">Homodimer.</text>
</comment>
<comment type="induction">
    <text evidence="8 9">The expression of the hexadehydro-astechrome cluster is induced by glucose (PubMed:36422047). Expression is controlled by ambiant iron conditions in a hapX- and steA-dependent manner (PubMed:25386169).</text>
</comment>
<comment type="disruption phenotype">
    <text evidence="7">Leads to complete abolishment of hexadehydro-astechrome production and no intermediates or shunt metabolites are observed.</text>
</comment>
<comment type="similarity">
    <text evidence="12">Belongs to the tryptophan dimethylallyltransferase family.</text>
</comment>
<name>HASE_ASPFC</name>
<keyword id="KW-0031">Aminopeptidase</keyword>
<keyword id="KW-0378">Hydrolase</keyword>
<keyword id="KW-0645">Protease</keyword>
<keyword id="KW-0808">Transferase</keyword>
<keyword id="KW-0843">Virulence</keyword>
<sequence length="472" mass="52688">MSIGAEIDSLVPAPPGLNGTAAGYPAKTQKELSNGDFDAHDGLSLAQLTPYDVLTAALPLPAPASSTGFWWRETGPVMSKLLAKANYPLYTHYKYLMLYHTHILPLLGPRPPLENSTHPSPSNAPWRSFLTDDFTPLEPSWNVNGNSEAQSTIRLGIEPIGFEAGAAADPFNQAAVTQFMHSYEATEVGATLTLFEHFRNDMFVGPETYAALRAKIPEGEHTTQSFLAFDLDAGRVTTKAYFFPILMSLKTGQSTTKVVSDSILHLALKSEVWGVQTIAAMSVMEAWIGSYGGAAKTEMISVDCVNEADSRIKIYVRMPHTSLRKVKEAYCLGGRLTDENTKEGLKLLDELWRTVFGIDDEDAELPQNSHRTAGTIFNFELRPGKWFPEPKVYLPVRHYCESDMQIASRLQTFFGRLGWHNMEKDYCKHLEDLFPHHPLSSSTGTHTFLSFSYKKQKGVYMTMYYNLRVYST</sequence>